<gene>
    <name evidence="1" type="primary">hisG</name>
    <name type="ordered locus">NTHI0599</name>
</gene>
<dbReference type="EC" id="2.4.2.17" evidence="1"/>
<dbReference type="EMBL" id="CP000057">
    <property type="protein sequence ID" value="AAX87522.1"/>
    <property type="molecule type" value="Genomic_DNA"/>
</dbReference>
<dbReference type="RefSeq" id="WP_005656529.1">
    <property type="nucleotide sequence ID" value="NC_007146.2"/>
</dbReference>
<dbReference type="SMR" id="Q4QN75"/>
<dbReference type="GeneID" id="93219482"/>
<dbReference type="KEGG" id="hit:NTHI0599"/>
<dbReference type="HOGENOM" id="CLU_038115_1_0_6"/>
<dbReference type="UniPathway" id="UPA00031">
    <property type="reaction ID" value="UER00006"/>
</dbReference>
<dbReference type="Proteomes" id="UP000002525">
    <property type="component" value="Chromosome"/>
</dbReference>
<dbReference type="GO" id="GO:0005737">
    <property type="term" value="C:cytoplasm"/>
    <property type="evidence" value="ECO:0007669"/>
    <property type="project" value="UniProtKB-SubCell"/>
</dbReference>
<dbReference type="GO" id="GO:0005524">
    <property type="term" value="F:ATP binding"/>
    <property type="evidence" value="ECO:0007669"/>
    <property type="project" value="UniProtKB-KW"/>
</dbReference>
<dbReference type="GO" id="GO:0003879">
    <property type="term" value="F:ATP phosphoribosyltransferase activity"/>
    <property type="evidence" value="ECO:0007669"/>
    <property type="project" value="UniProtKB-UniRule"/>
</dbReference>
<dbReference type="GO" id="GO:0000287">
    <property type="term" value="F:magnesium ion binding"/>
    <property type="evidence" value="ECO:0007669"/>
    <property type="project" value="UniProtKB-UniRule"/>
</dbReference>
<dbReference type="GO" id="GO:0000105">
    <property type="term" value="P:L-histidine biosynthetic process"/>
    <property type="evidence" value="ECO:0007669"/>
    <property type="project" value="UniProtKB-UniRule"/>
</dbReference>
<dbReference type="FunFam" id="3.30.70.120:FF:000002">
    <property type="entry name" value="ATP phosphoribosyltransferase"/>
    <property type="match status" value="1"/>
</dbReference>
<dbReference type="FunFam" id="3.40.190.10:FF:000008">
    <property type="entry name" value="ATP phosphoribosyltransferase"/>
    <property type="match status" value="1"/>
</dbReference>
<dbReference type="Gene3D" id="3.30.70.120">
    <property type="match status" value="1"/>
</dbReference>
<dbReference type="Gene3D" id="3.40.190.10">
    <property type="entry name" value="Periplasmic binding protein-like II"/>
    <property type="match status" value="2"/>
</dbReference>
<dbReference type="HAMAP" id="MF_00079">
    <property type="entry name" value="HisG_Long"/>
    <property type="match status" value="1"/>
</dbReference>
<dbReference type="InterPro" id="IPR020621">
    <property type="entry name" value="ATP-PRT_HisG_long"/>
</dbReference>
<dbReference type="InterPro" id="IPR013820">
    <property type="entry name" value="ATP_PRibTrfase_cat"/>
</dbReference>
<dbReference type="InterPro" id="IPR018198">
    <property type="entry name" value="ATP_PRibTrfase_CS"/>
</dbReference>
<dbReference type="InterPro" id="IPR001348">
    <property type="entry name" value="ATP_PRibTrfase_HisG"/>
</dbReference>
<dbReference type="InterPro" id="IPR013115">
    <property type="entry name" value="HisG_C"/>
</dbReference>
<dbReference type="InterPro" id="IPR011322">
    <property type="entry name" value="N-reg_PII-like_a/b"/>
</dbReference>
<dbReference type="InterPro" id="IPR015867">
    <property type="entry name" value="N-reg_PII/ATP_PRibTrfase_C"/>
</dbReference>
<dbReference type="NCBIfam" id="TIGR00070">
    <property type="entry name" value="hisG"/>
    <property type="match status" value="1"/>
</dbReference>
<dbReference type="NCBIfam" id="TIGR03455">
    <property type="entry name" value="HisG_C-term"/>
    <property type="match status" value="1"/>
</dbReference>
<dbReference type="PANTHER" id="PTHR21403:SF8">
    <property type="entry name" value="ATP PHOSPHORIBOSYLTRANSFERASE"/>
    <property type="match status" value="1"/>
</dbReference>
<dbReference type="PANTHER" id="PTHR21403">
    <property type="entry name" value="ATP PHOSPHORIBOSYLTRANSFERASE ATP-PRTASE"/>
    <property type="match status" value="1"/>
</dbReference>
<dbReference type="Pfam" id="PF01634">
    <property type="entry name" value="HisG"/>
    <property type="match status" value="1"/>
</dbReference>
<dbReference type="Pfam" id="PF08029">
    <property type="entry name" value="HisG_C"/>
    <property type="match status" value="1"/>
</dbReference>
<dbReference type="SUPFAM" id="SSF54913">
    <property type="entry name" value="GlnB-like"/>
    <property type="match status" value="1"/>
</dbReference>
<dbReference type="SUPFAM" id="SSF53850">
    <property type="entry name" value="Periplasmic binding protein-like II"/>
    <property type="match status" value="1"/>
</dbReference>
<dbReference type="PROSITE" id="PS01316">
    <property type="entry name" value="ATP_P_PHORIBOSYLTR"/>
    <property type="match status" value="1"/>
</dbReference>
<sequence length="303" mass="33821">MTNTTMQPNRLRIALQKKGRLSQDCAILLKQCGVKINWNEQRLIAYAENLPIEILRVRDDDIPGLIFDGVVDLGIIGENVLEEEELGRRAANETVTYKKLRQLDFGDCRLSLAVDRDCHYENVKDLANRRIATSYPHLLKRYMNENGVSFKSCLLNGSVEVAPSAGIAYAICDLVSSGATLEANGLKEVDVIYRSKACLIQRAEPLESTKQALVDKLLTRIQGVQQAAESKYIMLHAPKEKLEKITALLPGVENPTILPLASDTTRVAMHVVSQENLFWETMEQLKEAGASSILVLPIEKMME</sequence>
<evidence type="ECO:0000255" key="1">
    <source>
        <dbReference type="HAMAP-Rule" id="MF_00079"/>
    </source>
</evidence>
<reference key="1">
    <citation type="journal article" date="2005" name="J. Bacteriol.">
        <title>Genomic sequence of an otitis media isolate of nontypeable Haemophilus influenzae: comparative study with H. influenzae serotype d, strain KW20.</title>
        <authorList>
            <person name="Harrison A."/>
            <person name="Dyer D.W."/>
            <person name="Gillaspy A."/>
            <person name="Ray W.C."/>
            <person name="Mungur R."/>
            <person name="Carson M.B."/>
            <person name="Zhong H."/>
            <person name="Gipson J."/>
            <person name="Gipson M."/>
            <person name="Johnson L.S."/>
            <person name="Lewis L."/>
            <person name="Bakaletz L.O."/>
            <person name="Munson R.S. Jr."/>
        </authorList>
    </citation>
    <scope>NUCLEOTIDE SEQUENCE [LARGE SCALE GENOMIC DNA]</scope>
    <source>
        <strain>86-028NP</strain>
    </source>
</reference>
<proteinExistence type="inferred from homology"/>
<keyword id="KW-0028">Amino-acid biosynthesis</keyword>
<keyword id="KW-0067">ATP-binding</keyword>
<keyword id="KW-0963">Cytoplasm</keyword>
<keyword id="KW-0328">Glycosyltransferase</keyword>
<keyword id="KW-0368">Histidine biosynthesis</keyword>
<keyword id="KW-0460">Magnesium</keyword>
<keyword id="KW-0479">Metal-binding</keyword>
<keyword id="KW-0547">Nucleotide-binding</keyword>
<keyword id="KW-0808">Transferase</keyword>
<comment type="function">
    <text evidence="1">Catalyzes the condensation of ATP and 5-phosphoribose 1-diphosphate to form N'-(5'-phosphoribosyl)-ATP (PR-ATP). Has a crucial role in the pathway because the rate of histidine biosynthesis seems to be controlled primarily by regulation of HisG enzymatic activity.</text>
</comment>
<comment type="catalytic activity">
    <reaction evidence="1">
        <text>1-(5-phospho-beta-D-ribosyl)-ATP + diphosphate = 5-phospho-alpha-D-ribose 1-diphosphate + ATP</text>
        <dbReference type="Rhea" id="RHEA:18473"/>
        <dbReference type="ChEBI" id="CHEBI:30616"/>
        <dbReference type="ChEBI" id="CHEBI:33019"/>
        <dbReference type="ChEBI" id="CHEBI:58017"/>
        <dbReference type="ChEBI" id="CHEBI:73183"/>
        <dbReference type="EC" id="2.4.2.17"/>
    </reaction>
</comment>
<comment type="cofactor">
    <cofactor evidence="1">
        <name>Mg(2+)</name>
        <dbReference type="ChEBI" id="CHEBI:18420"/>
    </cofactor>
</comment>
<comment type="activity regulation">
    <text evidence="1">Feedback inhibited by histidine.</text>
</comment>
<comment type="pathway">
    <text evidence="1">Amino-acid biosynthesis; L-histidine biosynthesis; L-histidine from 5-phospho-alpha-D-ribose 1-diphosphate: step 1/9.</text>
</comment>
<comment type="subcellular location">
    <subcellularLocation>
        <location evidence="1">Cytoplasm</location>
    </subcellularLocation>
</comment>
<comment type="similarity">
    <text evidence="1">Belongs to the ATP phosphoribosyltransferase family. Long subfamily.</text>
</comment>
<protein>
    <recommendedName>
        <fullName evidence="1">ATP phosphoribosyltransferase</fullName>
        <shortName evidence="1">ATP-PRT</shortName>
        <shortName evidence="1">ATP-PRTase</shortName>
        <ecNumber evidence="1">2.4.2.17</ecNumber>
    </recommendedName>
</protein>
<feature type="chain" id="PRO_1000004462" description="ATP phosphoribosyltransferase">
    <location>
        <begin position="1"/>
        <end position="303"/>
    </location>
</feature>
<accession>Q4QN75</accession>
<name>HIS1_HAEI8</name>
<organism>
    <name type="scientific">Haemophilus influenzae (strain 86-028NP)</name>
    <dbReference type="NCBI Taxonomy" id="281310"/>
    <lineage>
        <taxon>Bacteria</taxon>
        <taxon>Pseudomonadati</taxon>
        <taxon>Pseudomonadota</taxon>
        <taxon>Gammaproteobacteria</taxon>
        <taxon>Pasteurellales</taxon>
        <taxon>Pasteurellaceae</taxon>
        <taxon>Haemophilus</taxon>
    </lineage>
</organism>